<sequence>MTMCSGARLALLVYGILMHSSVYGSPAASGLRFPGIRPENEAYDEDGNPQQDFYDSEPPGVGSPASALRDAYALYYPAEERDVAHGILDKAYRKVLDQLSARRYLQTLMAKGLGGTPGGGADDDSEPLSKRHSDGIFTDSYSRYRKQMAVKKYLAAVLGKRYKQRVKNKGRRIPYL</sequence>
<organism>
    <name type="scientific">Ovis aries</name>
    <name type="common">Sheep</name>
    <dbReference type="NCBI Taxonomy" id="9940"/>
    <lineage>
        <taxon>Eukaryota</taxon>
        <taxon>Metazoa</taxon>
        <taxon>Chordata</taxon>
        <taxon>Craniata</taxon>
        <taxon>Vertebrata</taxon>
        <taxon>Euteleostomi</taxon>
        <taxon>Mammalia</taxon>
        <taxon>Eutheria</taxon>
        <taxon>Laurasiatheria</taxon>
        <taxon>Artiodactyla</taxon>
        <taxon>Ruminantia</taxon>
        <taxon>Pecora</taxon>
        <taxon>Bovidae</taxon>
        <taxon>Caprinae</taxon>
        <taxon>Ovis</taxon>
    </lineage>
</organism>
<keyword id="KW-0027">Amidation</keyword>
<keyword id="KW-0165">Cleavage on pair of basic residues</keyword>
<keyword id="KW-0903">Direct protein sequencing</keyword>
<keyword id="KW-0372">Hormone</keyword>
<keyword id="KW-0524">Neurogenesis</keyword>
<keyword id="KW-1185">Reference proteome</keyword>
<keyword id="KW-0964">Secreted</keyword>
<keyword id="KW-0732">Signal</keyword>
<proteinExistence type="evidence at protein level"/>
<name>PACA_SHEEP</name>
<dbReference type="EMBL" id="M32216">
    <property type="protein sequence ID" value="AAA31575.1"/>
    <property type="molecule type" value="mRNA"/>
</dbReference>
<dbReference type="EMBL" id="S83511">
    <property type="protein sequence ID" value="AAB21469.1"/>
    <property type="molecule type" value="mRNA"/>
</dbReference>
<dbReference type="PIR" id="A34044">
    <property type="entry name" value="A34044"/>
</dbReference>
<dbReference type="RefSeq" id="NP_001009776.1">
    <property type="nucleotide sequence ID" value="NM_001009776.1"/>
</dbReference>
<dbReference type="BMRB" id="P16613"/>
<dbReference type="SMR" id="P16613"/>
<dbReference type="STRING" id="9940.ENSOARP00000010237"/>
<dbReference type="Ensembl" id="ENSOART00040024714">
    <property type="protein sequence ID" value="ENSOARP00040012471"/>
    <property type="gene ID" value="ENSOARG00040015102"/>
</dbReference>
<dbReference type="Ensembl" id="ENSOART00180052597">
    <property type="protein sequence ID" value="ENSOARP00180027518"/>
    <property type="gene ID" value="ENSOARG00180031518"/>
</dbReference>
<dbReference type="Ensembl" id="ENSOART00185048060">
    <property type="protein sequence ID" value="ENSOARP00185024101"/>
    <property type="gene ID" value="ENSOARG00185028966"/>
</dbReference>
<dbReference type="Ensembl" id="ENSOART00215030090">
    <property type="protein sequence ID" value="ENSOARP00215015810"/>
    <property type="gene ID" value="ENSOARG00215017940"/>
</dbReference>
<dbReference type="Ensembl" id="ENSOART00220086704">
    <property type="protein sequence ID" value="ENSOARP00220046452"/>
    <property type="gene ID" value="ENSOARG00220052335"/>
</dbReference>
<dbReference type="Ensembl" id="ENSOART00225051989">
    <property type="protein sequence ID" value="ENSOARP00225026267"/>
    <property type="gene ID" value="ENSOARG00225031381"/>
</dbReference>
<dbReference type="GeneID" id="443337"/>
<dbReference type="KEGG" id="oas:443337"/>
<dbReference type="CTD" id="116"/>
<dbReference type="OrthoDB" id="9875627at2759"/>
<dbReference type="Proteomes" id="UP000002356">
    <property type="component" value="Unplaced"/>
</dbReference>
<dbReference type="GO" id="GO:0005576">
    <property type="term" value="C:extracellular region"/>
    <property type="evidence" value="ECO:0007669"/>
    <property type="project" value="UniProtKB-SubCell"/>
</dbReference>
<dbReference type="GO" id="GO:0043005">
    <property type="term" value="C:neuron projection"/>
    <property type="evidence" value="ECO:0007669"/>
    <property type="project" value="TreeGrafter"/>
</dbReference>
<dbReference type="GO" id="GO:0043204">
    <property type="term" value="C:perikaryon"/>
    <property type="evidence" value="ECO:0007669"/>
    <property type="project" value="TreeGrafter"/>
</dbReference>
<dbReference type="GO" id="GO:0005184">
    <property type="term" value="F:neuropeptide hormone activity"/>
    <property type="evidence" value="ECO:0000250"/>
    <property type="project" value="UniProtKB"/>
</dbReference>
<dbReference type="GO" id="GO:0051428">
    <property type="term" value="F:peptide hormone receptor binding"/>
    <property type="evidence" value="ECO:0000250"/>
    <property type="project" value="UniProtKB"/>
</dbReference>
<dbReference type="GO" id="GO:0016521">
    <property type="term" value="F:pituitary adenylate cyclase activating polypeptide activity"/>
    <property type="evidence" value="ECO:0000314"/>
    <property type="project" value="BHF-UCL"/>
</dbReference>
<dbReference type="GO" id="GO:0031891">
    <property type="term" value="F:type 1 vasoactive intestinal polypeptide receptor binding"/>
    <property type="evidence" value="ECO:0000250"/>
    <property type="project" value="UniProtKB"/>
</dbReference>
<dbReference type="GO" id="GO:0031892">
    <property type="term" value="F:type 2 vasoactive intestinal polypeptide receptor binding"/>
    <property type="evidence" value="ECO:0000250"/>
    <property type="project" value="UniProtKB"/>
</dbReference>
<dbReference type="GO" id="GO:0007189">
    <property type="term" value="P:adenylate cyclase-activating G protein-coupled receptor signaling pathway"/>
    <property type="evidence" value="ECO:0000314"/>
    <property type="project" value="BHF-UCL"/>
</dbReference>
<dbReference type="GO" id="GO:0007188">
    <property type="term" value="P:adenylate cyclase-modulating G protein-coupled receptor signaling pathway"/>
    <property type="evidence" value="ECO:0000250"/>
    <property type="project" value="UniProtKB"/>
</dbReference>
<dbReference type="GO" id="GO:0030073">
    <property type="term" value="P:insulin secretion"/>
    <property type="evidence" value="ECO:0000250"/>
    <property type="project" value="UniProtKB"/>
</dbReference>
<dbReference type="GO" id="GO:0031175">
    <property type="term" value="P:neuron projection development"/>
    <property type="evidence" value="ECO:0000250"/>
    <property type="project" value="UniProtKB"/>
</dbReference>
<dbReference type="GO" id="GO:0007218">
    <property type="term" value="P:neuropeptide signaling pathway"/>
    <property type="evidence" value="ECO:0000250"/>
    <property type="project" value="UniProtKB"/>
</dbReference>
<dbReference type="GO" id="GO:0007204">
    <property type="term" value="P:positive regulation of cytosolic calcium ion concentration"/>
    <property type="evidence" value="ECO:0000250"/>
    <property type="project" value="UniProtKB"/>
</dbReference>
<dbReference type="GO" id="GO:0070374">
    <property type="term" value="P:positive regulation of ERK1 and ERK2 cascade"/>
    <property type="evidence" value="ECO:0000250"/>
    <property type="project" value="UniProtKB"/>
</dbReference>
<dbReference type="GO" id="GO:0010628">
    <property type="term" value="P:positive regulation of gene expression"/>
    <property type="evidence" value="ECO:0000250"/>
    <property type="project" value="UniProtKB"/>
</dbReference>
<dbReference type="GO" id="GO:0060124">
    <property type="term" value="P:positive regulation of growth hormone secretion"/>
    <property type="evidence" value="ECO:0000250"/>
    <property type="project" value="UniProtKB"/>
</dbReference>
<dbReference type="GO" id="GO:0043547">
    <property type="term" value="P:positive regulation of GTPase activity"/>
    <property type="evidence" value="ECO:0000250"/>
    <property type="project" value="UniProtKB"/>
</dbReference>
<dbReference type="GO" id="GO:0045860">
    <property type="term" value="P:positive regulation of protein kinase activity"/>
    <property type="evidence" value="ECO:0000250"/>
    <property type="project" value="UniProtKB"/>
</dbReference>
<dbReference type="GO" id="GO:0045944">
    <property type="term" value="P:positive regulation of transcription by RNA polymerase II"/>
    <property type="evidence" value="ECO:0000250"/>
    <property type="project" value="UniProtKB"/>
</dbReference>
<dbReference type="GO" id="GO:0008277">
    <property type="term" value="P:regulation of G protein-coupled receptor signaling pathway"/>
    <property type="evidence" value="ECO:0000250"/>
    <property type="project" value="UniProtKB"/>
</dbReference>
<dbReference type="GO" id="GO:0032880">
    <property type="term" value="P:regulation of protein localization"/>
    <property type="evidence" value="ECO:0000314"/>
    <property type="project" value="BHF-UCL"/>
</dbReference>
<dbReference type="Gene3D" id="6.10.250.590">
    <property type="match status" value="1"/>
</dbReference>
<dbReference type="InterPro" id="IPR000532">
    <property type="entry name" value="Glucagon_GIP_secretin_VIP"/>
</dbReference>
<dbReference type="InterPro" id="IPR046963">
    <property type="entry name" value="VIP/GHRH-like"/>
</dbReference>
<dbReference type="PANTHER" id="PTHR11213">
    <property type="entry name" value="GLUCAGON-FAMILY NEUROPEPTIDE"/>
    <property type="match status" value="1"/>
</dbReference>
<dbReference type="PANTHER" id="PTHR11213:SF1">
    <property type="entry name" value="PITUITARY ADENYLATE CYCLASE-ACTIVATING POLYPEPTIDE"/>
    <property type="match status" value="1"/>
</dbReference>
<dbReference type="Pfam" id="PF00123">
    <property type="entry name" value="Hormone_2"/>
    <property type="match status" value="2"/>
</dbReference>
<dbReference type="PRINTS" id="PR00275">
    <property type="entry name" value="GLUCAGON"/>
</dbReference>
<dbReference type="SMART" id="SM00070">
    <property type="entry name" value="GLUCA"/>
    <property type="match status" value="2"/>
</dbReference>
<dbReference type="PROSITE" id="PS00260">
    <property type="entry name" value="GLUCAGON"/>
    <property type="match status" value="1"/>
</dbReference>
<feature type="signal peptide" evidence="4">
    <location>
        <begin position="1"/>
        <end position="24"/>
    </location>
</feature>
<feature type="propeptide" id="PRO_0000011506">
    <location>
        <begin position="25"/>
        <end position="80"/>
    </location>
</feature>
<feature type="peptide" id="PRO_0000011507" description="PACAP-related peptide">
    <location>
        <begin position="82"/>
        <end position="129"/>
    </location>
</feature>
<feature type="peptide" id="PRO_0000011508" description="Pituitary adenylate cyclase-activating polypeptide 38">
    <location>
        <begin position="132"/>
        <end position="169"/>
    </location>
</feature>
<feature type="peptide" id="PRO_0000011509" description="Pituitary adenylate cyclase-activating polypeptide 27">
    <location>
        <begin position="132"/>
        <end position="158"/>
    </location>
</feature>
<feature type="propeptide" id="PRO_0000011510">
    <location>
        <begin position="173"/>
        <end position="176"/>
    </location>
</feature>
<feature type="region of interest" description="Disordered" evidence="5">
    <location>
        <begin position="36"/>
        <end position="62"/>
    </location>
</feature>
<feature type="region of interest" description="Disordered" evidence="5">
    <location>
        <begin position="115"/>
        <end position="134"/>
    </location>
</feature>
<feature type="region of interest" description="Important for receptor binding" evidence="3">
    <location>
        <begin position="150"/>
        <end position="158"/>
    </location>
</feature>
<feature type="modified residue" description="Leucine amide" evidence="7">
    <location>
        <position position="158"/>
    </location>
</feature>
<feature type="modified residue" description="Lysine amide" evidence="6">
    <location>
        <position position="169"/>
    </location>
</feature>
<comment type="function">
    <text evidence="1 2 3">PACAP is a neuropeptide involved in diverse array of physiological processes through activating the PACAP subfamily of class B1 G protein-coupled receptors: VIP receptor 1 (VIPR1), VIP receptor 2 (VIPR2), and PACAP type I receptor (ADCYAP1R1). Exerts neuroprotective and general cytoprotective effects due to anti-apoptotic, anti-inflammatory, and antioxidant actions. Promotes neuron projection development through the RAPGEF2/Rap1/B-Raf/ERK pathway (By similarity). In chromaffin cells, induces long-lasting increase of intracellular calcium concentrations and neuroendocrine secretion (By similarity). Involved in the control of glucose homeostasis, induces insulin secretion by pancreatic beta cells (By similarity). PACAP exists in two bioactive forms from proteolysis of the same precursor protein, PACAP27 and PACAP38, which differ by eleven amino acid residues in the C-terminus (By similarity).</text>
</comment>
<comment type="subcellular location">
    <subcellularLocation>
        <location>Secreted</location>
    </subcellularLocation>
</comment>
<comment type="similarity">
    <text evidence="8">Belongs to the glucagon family.</text>
</comment>
<gene>
    <name type="primary">ADCYAP1</name>
</gene>
<accession>P16613</accession>
<protein>
    <recommendedName>
        <fullName>Pituitary adenylate cyclase-activating polypeptide</fullName>
        <shortName>PACAP</shortName>
    </recommendedName>
    <component>
        <recommendedName>
            <fullName>PACAP-related peptide</fullName>
        </recommendedName>
        <alternativeName>
            <fullName>PRP-48</fullName>
        </alternativeName>
    </component>
    <component>
        <recommendedName>
            <fullName>Pituitary adenylate cyclase-activating polypeptide 27</fullName>
            <shortName>PACAP-27</shortName>
            <shortName>PACAP27</shortName>
        </recommendedName>
    </component>
    <component>
        <recommendedName>
            <fullName>Pituitary adenylate cyclase-activating polypeptide 38</fullName>
            <shortName>PACAP-38</shortName>
            <shortName>PACAP38</shortName>
        </recommendedName>
    </component>
</protein>
<evidence type="ECO:0000250" key="1">
    <source>
        <dbReference type="UniProtKB" id="O70176"/>
    </source>
</evidence>
<evidence type="ECO:0000250" key="2">
    <source>
        <dbReference type="UniProtKB" id="P13589"/>
    </source>
</evidence>
<evidence type="ECO:0000250" key="3">
    <source>
        <dbReference type="UniProtKB" id="P18509"/>
    </source>
</evidence>
<evidence type="ECO:0000255" key="4"/>
<evidence type="ECO:0000256" key="5">
    <source>
        <dbReference type="SAM" id="MobiDB-lite"/>
    </source>
</evidence>
<evidence type="ECO:0000269" key="6">
    <source>
    </source>
</evidence>
<evidence type="ECO:0000269" key="7">
    <source>
    </source>
</evidence>
<evidence type="ECO:0000305" key="8"/>
<reference key="1">
    <citation type="journal article" date="1990" name="Biochem. Biophys. Res. Commun.">
        <title>A novel peptide which stimulates adenylate cyclase: molecular cloning and characterization of the ovine and human cDNAs.</title>
        <authorList>
            <person name="Kimura C."/>
            <person name="Ohkubo S."/>
            <person name="Ogi K."/>
            <person name="Hosoya M."/>
            <person name="Itoh Y."/>
            <person name="Onda H."/>
            <person name="Miyata A."/>
            <person name="Jiang L."/>
            <person name="Dahl R.R."/>
            <person name="Stibbs H.H."/>
            <person name="Arimura A."/>
            <person name="Fujino M."/>
        </authorList>
    </citation>
    <scope>NUCLEOTIDE SEQUENCE [MRNA]</scope>
    <scope>AMIDATION AT LYS-169</scope>
    <source>
        <tissue>Hypothalamus</tissue>
    </source>
</reference>
<reference key="2">
    <citation type="journal article" date="1992" name="DNA Cell Biol.">
        <title>Primary structure and characterization of the precursor to human pituitary adenylate cyclase activating polypeptide.</title>
        <authorList>
            <person name="Ohkubo S."/>
            <person name="Kimura C."/>
            <person name="Ogi K."/>
            <person name="Okazaki K."/>
            <person name="Hosoya M."/>
            <person name="Onda H."/>
            <person name="Miyata A."/>
            <person name="Arimura A."/>
            <person name="Fujino M."/>
        </authorList>
    </citation>
    <scope>NUCLEOTIDE SEQUENCE [MRNA]</scope>
</reference>
<reference key="3">
    <citation type="journal article" date="1990" name="Biochem. Biophys. Res. Commun.">
        <title>Isolation of a neuropeptide corresponding to the N-terminal 27 residues of the pituitary adenylate cyclase activating polypeptide with 38 residues (PACAP38).</title>
        <authorList>
            <person name="Miyata A."/>
            <person name="Jiang L."/>
            <person name="Dahl R.D."/>
            <person name="Kitada C."/>
            <person name="Kubo K."/>
            <person name="Fujino M."/>
            <person name="Minamino N."/>
            <person name="Arimura A."/>
        </authorList>
    </citation>
    <scope>PROTEIN SEQUENCE OF 132-158</scope>
    <scope>AMIDATION AT LEU-158</scope>
</reference>